<evidence type="ECO:0000250" key="1">
    <source>
        <dbReference type="UniProtKB" id="P16410"/>
    </source>
</evidence>
<evidence type="ECO:0000255" key="2"/>
<evidence type="ECO:0000305" key="3"/>
<keyword id="KW-1064">Adaptive immunity</keyword>
<keyword id="KW-1003">Cell membrane</keyword>
<keyword id="KW-1015">Disulfide bond</keyword>
<keyword id="KW-0325">Glycoprotein</keyword>
<keyword id="KW-0391">Immunity</keyword>
<keyword id="KW-0393">Immunoglobulin domain</keyword>
<keyword id="KW-0472">Membrane</keyword>
<keyword id="KW-0597">Phosphoprotein</keyword>
<keyword id="KW-1185">Reference proteome</keyword>
<keyword id="KW-0732">Signal</keyword>
<keyword id="KW-0812">Transmembrane</keyword>
<keyword id="KW-1133">Transmembrane helix</keyword>
<accession>Q9XSI1</accession>
<accession>Q9TT02</accession>
<sequence length="223" mass="24206">MAGFGFRRHGVQPDLASRTWPCTALFSLLFIPVFSKGMHAAQPAVVLASSRGVASFVCEYGSSGNAAEVRVTMLRQAGSQMTEVCAATYTVEDELAFLDDSTCTGTSSGNKVNLTIQGLRAMGTGLYICKVELMYPPPYYVGMGNGTQIYVIDPEPCPDSDFLLWILAAVSSGLFFYSFLITAVSLSKMLKKRSPLTTGVYVKMPPTGPECEKQFQPYFIPIN</sequence>
<gene>
    <name type="primary">CTLA4</name>
</gene>
<comment type="function">
    <text evidence="1">Inhibitory receptor acting as a major negative regulator of T-cell responses. The affinity of CTLA4 for its natural B7 family ligands, CD80 and CD86, is considerably stronger than the affinity of their cognate stimulatory coreceptor CD28.</text>
</comment>
<comment type="subunit">
    <text evidence="1">Homodimer; disulfide-linked. Binds to CD80/B7-1 and CD86/B7.2. Interacts with ICOSLG.</text>
</comment>
<comment type="subcellular location">
    <subcellularLocation>
        <location evidence="1">Cell membrane</location>
        <topology evidence="1">Single-pass type I membrane protein</topology>
    </subcellularLocation>
    <text evidence="1">Exists primarily an intracellular antigen whose surface expression is tightly regulated by restricted trafficking to the cell surface and rapid internalization.</text>
</comment>
<comment type="PTM">
    <text evidence="1">N-glycosylation is important for dimerization.</text>
</comment>
<comment type="PTM">
    <text evidence="1">Phosphorylation at Tyr-201 prevents binding to the AP-2 adapter complex, blocks endocytosis, and leads to retention of CTLA4 on the cell surface.</text>
</comment>
<feature type="signal peptide" evidence="2">
    <location>
        <begin position="1"/>
        <end position="35"/>
    </location>
</feature>
<feature type="chain" id="PRO_0000014733" description="Cytotoxic T-lymphocyte protein 4">
    <location>
        <begin position="36"/>
        <end position="223"/>
    </location>
</feature>
<feature type="topological domain" description="Extracellular" evidence="2">
    <location>
        <begin position="36"/>
        <end position="161"/>
    </location>
</feature>
<feature type="transmembrane region" description="Helical" evidence="2">
    <location>
        <begin position="162"/>
        <end position="182"/>
    </location>
</feature>
<feature type="topological domain" description="Cytoplasmic" evidence="2">
    <location>
        <begin position="183"/>
        <end position="223"/>
    </location>
</feature>
<feature type="domain" description="Ig-like V-type">
    <location>
        <begin position="39"/>
        <end position="140"/>
    </location>
</feature>
<feature type="region of interest" description="Homodimerization" evidence="1">
    <location>
        <begin position="46"/>
        <end position="50"/>
    </location>
</feature>
<feature type="region of interest" description="Important for interaction with CD80 and CD86" evidence="1">
    <location>
        <begin position="134"/>
        <end position="139"/>
    </location>
</feature>
<feature type="region of interest" description="Homodimerization" evidence="1">
    <location>
        <begin position="150"/>
        <end position="155"/>
    </location>
</feature>
<feature type="modified residue" description="Phosphotyrosine; by TXK and JAK2" evidence="1">
    <location>
        <position position="201"/>
    </location>
</feature>
<feature type="glycosylation site" description="N-linked (GlcNAc...) asparagine" evidence="2">
    <location>
        <position position="113"/>
    </location>
</feature>
<feature type="glycosylation site" description="N-linked (GlcNAc...) asparagine" evidence="2">
    <location>
        <position position="145"/>
    </location>
</feature>
<feature type="disulfide bond" evidence="1">
    <location>
        <begin position="58"/>
        <end position="129"/>
    </location>
</feature>
<feature type="disulfide bond" evidence="1">
    <location>
        <begin position="85"/>
        <end position="103"/>
    </location>
</feature>
<feature type="disulfide bond" description="Interchain" evidence="1">
    <location>
        <position position="157"/>
    </location>
</feature>
<feature type="sequence conflict" description="In Ref. 2; AAF23813." evidence="3" ref="2">
    <original>V</original>
    <variation>A</variation>
    <location>
        <position position="11"/>
    </location>
</feature>
<feature type="sequence conflict" description="In Ref. 2; AAF23813." evidence="3" ref="2">
    <original>S</original>
    <variation>C</variation>
    <location>
        <position position="35"/>
    </location>
</feature>
<feature type="sequence conflict" description="In Ref. 2; AAF23813." evidence="3" ref="2">
    <original>A</original>
    <variation>V</variation>
    <location>
        <position position="40"/>
    </location>
</feature>
<feature type="sequence conflict" description="In Ref. 2; AAF23813." evidence="3" ref="2">
    <original>M</original>
    <variation>V</variation>
    <location>
        <position position="73"/>
    </location>
</feature>
<feature type="sequence conflict" description="In Ref. 2; AAF23813." evidence="3" ref="2">
    <original>G</original>
    <variation>D</variation>
    <location>
        <position position="123"/>
    </location>
</feature>
<feature type="sequence conflict" description="In Ref. 2; AAF23813." evidence="3" ref="2">
    <original>G</original>
    <variation>E</variation>
    <location>
        <position position="208"/>
    </location>
</feature>
<protein>
    <recommendedName>
        <fullName>Cytotoxic T-lymphocyte protein 4</fullName>
    </recommendedName>
    <alternativeName>
        <fullName>Cytotoxic T-lymphocyte-associated antigen 4</fullName>
        <shortName>CTLA-4</shortName>
    </alternativeName>
    <cdAntigenName>CD152</cdAntigenName>
</protein>
<organism>
    <name type="scientific">Canis lupus familiaris</name>
    <name type="common">Dog</name>
    <name type="synonym">Canis familiaris</name>
    <dbReference type="NCBI Taxonomy" id="9615"/>
    <lineage>
        <taxon>Eukaryota</taxon>
        <taxon>Metazoa</taxon>
        <taxon>Chordata</taxon>
        <taxon>Craniata</taxon>
        <taxon>Vertebrata</taxon>
        <taxon>Euteleostomi</taxon>
        <taxon>Mammalia</taxon>
        <taxon>Eutheria</taxon>
        <taxon>Laurasiatheria</taxon>
        <taxon>Carnivora</taxon>
        <taxon>Caniformia</taxon>
        <taxon>Canidae</taxon>
        <taxon>Canis</taxon>
    </lineage>
</organism>
<reference key="1">
    <citation type="journal article" date="2000" name="Immunogenetics">
        <title>Cloning and sequencing of dog cDNA encoding the T-cell costimulatory molecule CTLA-4.</title>
        <authorList>
            <person name="Khatlani T.S."/>
            <person name="Ohno K."/>
            <person name="Inokuma H."/>
            <person name="Onishi T."/>
        </authorList>
    </citation>
    <scope>NUCLEOTIDE SEQUENCE [MRNA]</scope>
    <source>
        <strain>Beagle</strain>
    </source>
</reference>
<reference key="2">
    <citation type="submission" date="1999-12" db="EMBL/GenBank/DDBJ databases">
        <title>Molecular cloning and sequencing of canine CTLA-4 gene and its relationship with autoimmune disease.</title>
        <authorList>
            <person name="Wei Z."/>
            <person name="Happ G.M."/>
        </authorList>
    </citation>
    <scope>NUCLEOTIDE SEQUENCE [MRNA]</scope>
    <source>
        <strain>Doberman Pinscher X Alaska husky</strain>
    </source>
</reference>
<dbReference type="EMBL" id="AF143204">
    <property type="protein sequence ID" value="AAD31889.1"/>
    <property type="molecule type" value="mRNA"/>
</dbReference>
<dbReference type="EMBL" id="AF215893">
    <property type="protein sequence ID" value="AAF23813.1"/>
    <property type="molecule type" value="mRNA"/>
</dbReference>
<dbReference type="SMR" id="Q9XSI1"/>
<dbReference type="FunCoup" id="Q9XSI1">
    <property type="interactions" value="119"/>
</dbReference>
<dbReference type="STRING" id="9615.ENSCAFP00000018967"/>
<dbReference type="GlyCosmos" id="Q9XSI1">
    <property type="glycosylation" value="2 sites, No reported glycans"/>
</dbReference>
<dbReference type="PaxDb" id="9612-ENSCAFP00000018967"/>
<dbReference type="eggNOG" id="ENOG502RZVK">
    <property type="taxonomic scope" value="Eukaryota"/>
</dbReference>
<dbReference type="InParanoid" id="Q9XSI1"/>
<dbReference type="OrthoDB" id="9908091at2759"/>
<dbReference type="Proteomes" id="UP000002254">
    <property type="component" value="Unplaced"/>
</dbReference>
<dbReference type="Proteomes" id="UP000694429">
    <property type="component" value="Unplaced"/>
</dbReference>
<dbReference type="Proteomes" id="UP000694542">
    <property type="component" value="Unplaced"/>
</dbReference>
<dbReference type="Proteomes" id="UP000805418">
    <property type="component" value="Unplaced"/>
</dbReference>
<dbReference type="GO" id="GO:0009897">
    <property type="term" value="C:external side of plasma membrane"/>
    <property type="evidence" value="ECO:0000318"/>
    <property type="project" value="GO_Central"/>
</dbReference>
<dbReference type="GO" id="GO:0005886">
    <property type="term" value="C:plasma membrane"/>
    <property type="evidence" value="ECO:0000250"/>
    <property type="project" value="UniProtKB"/>
</dbReference>
<dbReference type="GO" id="GO:0002250">
    <property type="term" value="P:adaptive immune response"/>
    <property type="evidence" value="ECO:0007669"/>
    <property type="project" value="UniProtKB-KW"/>
</dbReference>
<dbReference type="GO" id="GO:0050853">
    <property type="term" value="P:B cell receptor signaling pathway"/>
    <property type="evidence" value="ECO:0000318"/>
    <property type="project" value="GO_Central"/>
</dbReference>
<dbReference type="GO" id="GO:0045590">
    <property type="term" value="P:negative regulation of regulatory T cell differentiation"/>
    <property type="evidence" value="ECO:0000318"/>
    <property type="project" value="GO_Central"/>
</dbReference>
<dbReference type="GO" id="GO:0042129">
    <property type="term" value="P:regulation of T cell proliferation"/>
    <property type="evidence" value="ECO:0007669"/>
    <property type="project" value="InterPro"/>
</dbReference>
<dbReference type="GO" id="GO:0050852">
    <property type="term" value="P:T cell receptor signaling pathway"/>
    <property type="evidence" value="ECO:0000318"/>
    <property type="project" value="GO_Central"/>
</dbReference>
<dbReference type="CDD" id="cd05721">
    <property type="entry name" value="IgV_CTLA-4"/>
    <property type="match status" value="1"/>
</dbReference>
<dbReference type="FunFam" id="2.60.40.10:FF:000686">
    <property type="entry name" value="Cytotoxic T-lymphocyte protein 4"/>
    <property type="match status" value="1"/>
</dbReference>
<dbReference type="Gene3D" id="2.60.40.10">
    <property type="entry name" value="Immunoglobulins"/>
    <property type="match status" value="1"/>
</dbReference>
<dbReference type="InterPro" id="IPR008096">
    <property type="entry name" value="CTLA4"/>
</dbReference>
<dbReference type="InterPro" id="IPR040216">
    <property type="entry name" value="CTLA4/CD28"/>
</dbReference>
<dbReference type="InterPro" id="IPR036179">
    <property type="entry name" value="Ig-like_dom_sf"/>
</dbReference>
<dbReference type="InterPro" id="IPR013783">
    <property type="entry name" value="Ig-like_fold"/>
</dbReference>
<dbReference type="InterPro" id="IPR013106">
    <property type="entry name" value="Ig_V-set"/>
</dbReference>
<dbReference type="PANTHER" id="PTHR11494">
    <property type="entry name" value="CYTOTOXIC T-LYMPHOCYTE PROTEIN"/>
    <property type="match status" value="1"/>
</dbReference>
<dbReference type="PANTHER" id="PTHR11494:SF8">
    <property type="entry name" value="CYTOTOXIC T-LYMPHOCYTE PROTEIN 4"/>
    <property type="match status" value="1"/>
</dbReference>
<dbReference type="Pfam" id="PF07686">
    <property type="entry name" value="V-set"/>
    <property type="match status" value="1"/>
</dbReference>
<dbReference type="PRINTS" id="PR01720">
    <property type="entry name" value="CTLANTIGEN4"/>
</dbReference>
<dbReference type="SUPFAM" id="SSF48726">
    <property type="entry name" value="Immunoglobulin"/>
    <property type="match status" value="1"/>
</dbReference>
<proteinExistence type="evidence at transcript level"/>
<name>CTLA4_CANLF</name>